<evidence type="ECO:0000250" key="1"/>
<evidence type="ECO:0000255" key="2"/>
<evidence type="ECO:0000256" key="3">
    <source>
        <dbReference type="SAM" id="MobiDB-lite"/>
    </source>
</evidence>
<evidence type="ECO:0000305" key="4"/>
<comment type="function">
    <text evidence="1">Involved in nucleolar integrity and required for processing of the pre-rRNA for the 60S ribosome subunit.</text>
</comment>
<comment type="subcellular location">
    <subcellularLocation>
        <location evidence="1">Nucleus</location>
        <location evidence="1">Nucleolus</location>
    </subcellularLocation>
</comment>
<comment type="similarity">
    <text evidence="4">Belongs to the CGR1 family.</text>
</comment>
<protein>
    <recommendedName>
        <fullName>rRNA-processing protein cgrA</fullName>
    </recommendedName>
</protein>
<name>CGR1_ASPTN</name>
<reference key="1">
    <citation type="submission" date="2005-09" db="EMBL/GenBank/DDBJ databases">
        <title>Annotation of the Aspergillus terreus NIH2624 genome.</title>
        <authorList>
            <person name="Birren B.W."/>
            <person name="Lander E.S."/>
            <person name="Galagan J.E."/>
            <person name="Nusbaum C."/>
            <person name="Devon K."/>
            <person name="Henn M."/>
            <person name="Ma L.-J."/>
            <person name="Jaffe D.B."/>
            <person name="Butler J."/>
            <person name="Alvarez P."/>
            <person name="Gnerre S."/>
            <person name="Grabherr M."/>
            <person name="Kleber M."/>
            <person name="Mauceli E.W."/>
            <person name="Brockman W."/>
            <person name="Rounsley S."/>
            <person name="Young S.K."/>
            <person name="LaButti K."/>
            <person name="Pushparaj V."/>
            <person name="DeCaprio D."/>
            <person name="Crawford M."/>
            <person name="Koehrsen M."/>
            <person name="Engels R."/>
            <person name="Montgomery P."/>
            <person name="Pearson M."/>
            <person name="Howarth C."/>
            <person name="Larson L."/>
            <person name="Luoma S."/>
            <person name="White J."/>
            <person name="Alvarado L."/>
            <person name="Kodira C.D."/>
            <person name="Zeng Q."/>
            <person name="Oleary S."/>
            <person name="Yandava C."/>
            <person name="Denning D.W."/>
            <person name="Nierman W.C."/>
            <person name="Milne T."/>
            <person name="Madden K."/>
        </authorList>
    </citation>
    <scope>NUCLEOTIDE SEQUENCE [LARGE SCALE GENOMIC DNA]</scope>
    <source>
        <strain>NIH 2624 / FGSC A1156</strain>
    </source>
</reference>
<gene>
    <name type="primary">cgrA</name>
    <name type="synonym">cgr1</name>
    <name type="ORF">ATEG_10388</name>
</gene>
<feature type="chain" id="PRO_0000278948" description="rRNA-processing protein cgrA">
    <location>
        <begin position="1"/>
        <end position="114"/>
    </location>
</feature>
<feature type="region of interest" description="Disordered" evidence="3">
    <location>
        <begin position="1"/>
        <end position="96"/>
    </location>
</feature>
<feature type="coiled-coil region" evidence="2">
    <location>
        <begin position="40"/>
        <end position="101"/>
    </location>
</feature>
<feature type="compositionally biased region" description="Basic and acidic residues" evidence="3">
    <location>
        <begin position="41"/>
        <end position="93"/>
    </location>
</feature>
<sequence length="114" mass="13617">MSASESAPSAPPVKGMRKNGKNWHDSKKPFRPTAGMTSYAKRLEARKHQEAVKEHERELKEEKEAERQAHIQRIKDRRAAKEEKERYDKMAEKMHRKRVERLKRREKRNKLLNS</sequence>
<proteinExistence type="inferred from homology"/>
<keyword id="KW-0175">Coiled coil</keyword>
<keyword id="KW-0539">Nucleus</keyword>
<keyword id="KW-1185">Reference proteome</keyword>
<keyword id="KW-0690">Ribosome biogenesis</keyword>
<keyword id="KW-0698">rRNA processing</keyword>
<dbReference type="EMBL" id="CH476610">
    <property type="protein sequence ID" value="EAU29385.1"/>
    <property type="molecule type" value="Genomic_DNA"/>
</dbReference>
<dbReference type="RefSeq" id="XP_001218736.1">
    <property type="nucleotide sequence ID" value="XM_001218735.1"/>
</dbReference>
<dbReference type="SMR" id="Q0C7E6"/>
<dbReference type="STRING" id="341663.Q0C7E6"/>
<dbReference type="EnsemblFungi" id="EAU29385">
    <property type="protein sequence ID" value="EAU29385"/>
    <property type="gene ID" value="ATEG_10388"/>
</dbReference>
<dbReference type="GeneID" id="4354651"/>
<dbReference type="VEuPathDB" id="FungiDB:ATEG_10388"/>
<dbReference type="eggNOG" id="ENOG502S7VB">
    <property type="taxonomic scope" value="Eukaryota"/>
</dbReference>
<dbReference type="HOGENOM" id="CLU_125051_0_0_1"/>
<dbReference type="OMA" id="NGKQWHD"/>
<dbReference type="OrthoDB" id="3942380at2759"/>
<dbReference type="Proteomes" id="UP000007963">
    <property type="component" value="Unassembled WGS sequence"/>
</dbReference>
<dbReference type="GO" id="GO:0005730">
    <property type="term" value="C:nucleolus"/>
    <property type="evidence" value="ECO:0007669"/>
    <property type="project" value="UniProtKB-SubCell"/>
</dbReference>
<dbReference type="GO" id="GO:0006364">
    <property type="term" value="P:rRNA processing"/>
    <property type="evidence" value="ECO:0007669"/>
    <property type="project" value="UniProtKB-KW"/>
</dbReference>
<dbReference type="InterPro" id="IPR005579">
    <property type="entry name" value="Cgr1-like"/>
</dbReference>
<dbReference type="Pfam" id="PF03879">
    <property type="entry name" value="Cgr1"/>
    <property type="match status" value="1"/>
</dbReference>
<organism>
    <name type="scientific">Aspergillus terreus (strain NIH 2624 / FGSC A1156)</name>
    <dbReference type="NCBI Taxonomy" id="341663"/>
    <lineage>
        <taxon>Eukaryota</taxon>
        <taxon>Fungi</taxon>
        <taxon>Dikarya</taxon>
        <taxon>Ascomycota</taxon>
        <taxon>Pezizomycotina</taxon>
        <taxon>Eurotiomycetes</taxon>
        <taxon>Eurotiomycetidae</taxon>
        <taxon>Eurotiales</taxon>
        <taxon>Aspergillaceae</taxon>
        <taxon>Aspergillus</taxon>
        <taxon>Aspergillus subgen. Circumdati</taxon>
    </lineage>
</organism>
<accession>Q0C7E6</accession>